<proteinExistence type="inferred from homology"/>
<comment type="subcellular location">
    <subcellularLocation>
        <location evidence="1">Cytoplasm</location>
    </subcellularLocation>
</comment>
<comment type="similarity">
    <text evidence="1">Belongs to the TACO1 family.</text>
</comment>
<dbReference type="EMBL" id="CP000090">
    <property type="protein sequence ID" value="AAZ61883.1"/>
    <property type="molecule type" value="Genomic_DNA"/>
</dbReference>
<dbReference type="SMR" id="Q46YA0"/>
<dbReference type="STRING" id="264198.Reut_A2522"/>
<dbReference type="KEGG" id="reu:Reut_A2522"/>
<dbReference type="eggNOG" id="COG0217">
    <property type="taxonomic scope" value="Bacteria"/>
</dbReference>
<dbReference type="HOGENOM" id="CLU_062974_2_2_4"/>
<dbReference type="OrthoDB" id="9781053at2"/>
<dbReference type="GO" id="GO:0005829">
    <property type="term" value="C:cytosol"/>
    <property type="evidence" value="ECO:0007669"/>
    <property type="project" value="TreeGrafter"/>
</dbReference>
<dbReference type="GO" id="GO:0003677">
    <property type="term" value="F:DNA binding"/>
    <property type="evidence" value="ECO:0007669"/>
    <property type="project" value="UniProtKB-UniRule"/>
</dbReference>
<dbReference type="GO" id="GO:0006355">
    <property type="term" value="P:regulation of DNA-templated transcription"/>
    <property type="evidence" value="ECO:0007669"/>
    <property type="project" value="UniProtKB-UniRule"/>
</dbReference>
<dbReference type="FunFam" id="1.10.10.200:FF:000001">
    <property type="entry name" value="Probable transcriptional regulatory protein YebC"/>
    <property type="match status" value="1"/>
</dbReference>
<dbReference type="FunFam" id="3.30.70.980:FF:000002">
    <property type="entry name" value="Probable transcriptional regulatory protein YebC"/>
    <property type="match status" value="1"/>
</dbReference>
<dbReference type="Gene3D" id="1.10.10.200">
    <property type="match status" value="1"/>
</dbReference>
<dbReference type="Gene3D" id="3.30.70.980">
    <property type="match status" value="2"/>
</dbReference>
<dbReference type="HAMAP" id="MF_00693">
    <property type="entry name" value="Transcrip_reg_TACO1"/>
    <property type="match status" value="1"/>
</dbReference>
<dbReference type="InterPro" id="IPR017856">
    <property type="entry name" value="Integrase-like_N"/>
</dbReference>
<dbReference type="InterPro" id="IPR048300">
    <property type="entry name" value="TACO1_YebC-like_2nd/3rd_dom"/>
</dbReference>
<dbReference type="InterPro" id="IPR049083">
    <property type="entry name" value="TACO1_YebC_N"/>
</dbReference>
<dbReference type="InterPro" id="IPR002876">
    <property type="entry name" value="Transcrip_reg_TACO1-like"/>
</dbReference>
<dbReference type="InterPro" id="IPR026564">
    <property type="entry name" value="Transcrip_reg_TACO1-like_dom3"/>
</dbReference>
<dbReference type="InterPro" id="IPR029072">
    <property type="entry name" value="YebC-like"/>
</dbReference>
<dbReference type="NCBIfam" id="NF001030">
    <property type="entry name" value="PRK00110.1"/>
    <property type="match status" value="1"/>
</dbReference>
<dbReference type="NCBIfam" id="NF009044">
    <property type="entry name" value="PRK12378.1"/>
    <property type="match status" value="1"/>
</dbReference>
<dbReference type="NCBIfam" id="TIGR01033">
    <property type="entry name" value="YebC/PmpR family DNA-binding transcriptional regulator"/>
    <property type="match status" value="1"/>
</dbReference>
<dbReference type="PANTHER" id="PTHR12532:SF6">
    <property type="entry name" value="TRANSCRIPTIONAL REGULATORY PROTEIN YEBC-RELATED"/>
    <property type="match status" value="1"/>
</dbReference>
<dbReference type="PANTHER" id="PTHR12532">
    <property type="entry name" value="TRANSLATIONAL ACTIVATOR OF CYTOCHROME C OXIDASE 1"/>
    <property type="match status" value="1"/>
</dbReference>
<dbReference type="Pfam" id="PF20772">
    <property type="entry name" value="TACO1_YebC_N"/>
    <property type="match status" value="1"/>
</dbReference>
<dbReference type="Pfam" id="PF01709">
    <property type="entry name" value="Transcrip_reg"/>
    <property type="match status" value="1"/>
</dbReference>
<dbReference type="SUPFAM" id="SSF75625">
    <property type="entry name" value="YebC-like"/>
    <property type="match status" value="1"/>
</dbReference>
<feature type="chain" id="PRO_0000257110" description="Probable transcriptional regulatory protein Reut_A2522">
    <location>
        <begin position="1"/>
        <end position="241"/>
    </location>
</feature>
<keyword id="KW-0963">Cytoplasm</keyword>
<keyword id="KW-0238">DNA-binding</keyword>
<keyword id="KW-0804">Transcription</keyword>
<keyword id="KW-0805">Transcription regulation</keyword>
<gene>
    <name type="ordered locus">Reut_A2522</name>
</gene>
<organism>
    <name type="scientific">Cupriavidus pinatubonensis (strain JMP 134 / LMG 1197)</name>
    <name type="common">Cupriavidus necator (strain JMP 134)</name>
    <dbReference type="NCBI Taxonomy" id="264198"/>
    <lineage>
        <taxon>Bacteria</taxon>
        <taxon>Pseudomonadati</taxon>
        <taxon>Pseudomonadota</taxon>
        <taxon>Betaproteobacteria</taxon>
        <taxon>Burkholderiales</taxon>
        <taxon>Burkholderiaceae</taxon>
        <taxon>Cupriavidus</taxon>
    </lineage>
</organism>
<reference key="1">
    <citation type="journal article" date="2010" name="PLoS ONE">
        <title>The complete multipartite genome sequence of Cupriavidus necator JMP134, a versatile pollutant degrader.</title>
        <authorList>
            <person name="Lykidis A."/>
            <person name="Perez-Pantoja D."/>
            <person name="Ledger T."/>
            <person name="Mavromatis K."/>
            <person name="Anderson I.J."/>
            <person name="Ivanova N.N."/>
            <person name="Hooper S.D."/>
            <person name="Lapidus A."/>
            <person name="Lucas S."/>
            <person name="Gonzalez B."/>
            <person name="Kyrpides N.C."/>
        </authorList>
    </citation>
    <scope>NUCLEOTIDE SEQUENCE [LARGE SCALE GENOMIC DNA]</scope>
    <source>
        <strain>JMP134 / LMG 1197</strain>
    </source>
</reference>
<accession>Q46YA0</accession>
<evidence type="ECO:0000255" key="1">
    <source>
        <dbReference type="HAMAP-Rule" id="MF_00693"/>
    </source>
</evidence>
<sequence length="241" mass="25971">MAGHSKWANIKHKKAAADAKRGKIWTRLIKEITVAAKLGGGDPDSNPRLRLSMDKAMDANMPKDNIQRAIQRGVGGLEGVNYEEIRYEGYGLSGAAIIVDCLTDNRTRTVAEVRHAFSKHGGNMGTEGSVAFMFTHCGQFLFAPGTPEDKLMDAALEAGADDVVTNEDGSIEVTCPPNDFSAVKAALEAAGFKAEVADVVMKPQNEVDFTGDDAVKMQKLLDALENLDDVQEVFTNAVIEE</sequence>
<protein>
    <recommendedName>
        <fullName evidence="1">Probable transcriptional regulatory protein Reut_A2522</fullName>
    </recommendedName>
</protein>
<name>Y2522_CUPPJ</name>